<organism>
    <name type="scientific">Gossypium barbadense</name>
    <name type="common">Sea Island cotton</name>
    <name type="synonym">Hibiscus barbadensis</name>
    <dbReference type="NCBI Taxonomy" id="3634"/>
    <lineage>
        <taxon>Eukaryota</taxon>
        <taxon>Viridiplantae</taxon>
        <taxon>Streptophyta</taxon>
        <taxon>Embryophyta</taxon>
        <taxon>Tracheophyta</taxon>
        <taxon>Spermatophyta</taxon>
        <taxon>Magnoliopsida</taxon>
        <taxon>eudicotyledons</taxon>
        <taxon>Gunneridae</taxon>
        <taxon>Pentapetalae</taxon>
        <taxon>rosids</taxon>
        <taxon>malvids</taxon>
        <taxon>Malvales</taxon>
        <taxon>Malvaceae</taxon>
        <taxon>Malvoideae</taxon>
        <taxon>Gossypium</taxon>
    </lineage>
</organism>
<accession>A0ZZ82</accession>
<keyword id="KW-0150">Chloroplast</keyword>
<keyword id="KW-0472">Membrane</keyword>
<keyword id="KW-0520">NAD</keyword>
<keyword id="KW-0521">NADP</keyword>
<keyword id="KW-0934">Plastid</keyword>
<keyword id="KW-0618">Plastoquinone</keyword>
<keyword id="KW-0874">Quinone</keyword>
<keyword id="KW-0793">Thylakoid</keyword>
<keyword id="KW-1278">Translocase</keyword>
<keyword id="KW-0812">Transmembrane</keyword>
<keyword id="KW-1133">Transmembrane helix</keyword>
<keyword id="KW-0813">Transport</keyword>
<proteinExistence type="inferred from homology"/>
<evidence type="ECO:0000250" key="1"/>
<evidence type="ECO:0000255" key="2"/>
<evidence type="ECO:0000305" key="3"/>
<reference key="1">
    <citation type="journal article" date="2006" name="Genes Genet. Syst.">
        <title>Complete nucleotide sequence of the cotton (Gossypium barbadense L.) chloroplast genome with a comparative analysis of sequences among 9 dicot plants.</title>
        <authorList>
            <person name="Ibrahim R.I.H."/>
            <person name="Azuma J."/>
            <person name="Sakamoto M."/>
        </authorList>
    </citation>
    <scope>NUCLEOTIDE SEQUENCE [LARGE SCALE GENOMIC DNA]</scope>
</reference>
<feature type="chain" id="PRO_0000360936" description="NAD(P)H-quinone oxidoreductase subunit 5, chloroplastic">
    <location>
        <begin position="1"/>
        <end position="745"/>
    </location>
</feature>
<feature type="transmembrane region" description="Helical" evidence="2">
    <location>
        <begin position="9"/>
        <end position="29"/>
    </location>
</feature>
<feature type="transmembrane region" description="Helical" evidence="2">
    <location>
        <begin position="50"/>
        <end position="70"/>
    </location>
</feature>
<feature type="transmembrane region" description="Helical" evidence="2">
    <location>
        <begin position="99"/>
        <end position="119"/>
    </location>
</feature>
<feature type="transmembrane region" description="Helical" evidence="2">
    <location>
        <begin position="135"/>
        <end position="155"/>
    </location>
</feature>
<feature type="transmembrane region" description="Helical" evidence="2">
    <location>
        <begin position="157"/>
        <end position="177"/>
    </location>
</feature>
<feature type="transmembrane region" description="Helical" evidence="2">
    <location>
        <begin position="194"/>
        <end position="214"/>
    </location>
</feature>
<feature type="transmembrane region" description="Helical" evidence="2">
    <location>
        <begin position="229"/>
        <end position="249"/>
    </location>
</feature>
<feature type="transmembrane region" description="Helical" evidence="2">
    <location>
        <begin position="268"/>
        <end position="288"/>
    </location>
</feature>
<feature type="transmembrane region" description="Helical" evidence="2">
    <location>
        <begin position="290"/>
        <end position="310"/>
    </location>
</feature>
<feature type="transmembrane region" description="Helical" evidence="2">
    <location>
        <begin position="337"/>
        <end position="357"/>
    </location>
</feature>
<feature type="transmembrane region" description="Helical" evidence="2">
    <location>
        <begin position="364"/>
        <end position="384"/>
    </location>
</feature>
<feature type="transmembrane region" description="Helical" evidence="2">
    <location>
        <begin position="406"/>
        <end position="426"/>
    </location>
</feature>
<feature type="transmembrane region" description="Helical" evidence="2">
    <location>
        <begin position="435"/>
        <end position="455"/>
    </location>
</feature>
<feature type="transmembrane region" description="Helical" evidence="2">
    <location>
        <begin position="550"/>
        <end position="570"/>
    </location>
</feature>
<feature type="transmembrane region" description="Helical" evidence="2">
    <location>
        <begin position="610"/>
        <end position="630"/>
    </location>
</feature>
<feature type="transmembrane region" description="Helical" evidence="2">
    <location>
        <begin position="724"/>
        <end position="744"/>
    </location>
</feature>
<protein>
    <recommendedName>
        <fullName>NAD(P)H-quinone oxidoreductase subunit 5, chloroplastic</fullName>
        <ecNumber>7.1.1.-</ecNumber>
    </recommendedName>
    <alternativeName>
        <fullName>NAD(P)H dehydrogenase subunit 5</fullName>
    </alternativeName>
    <alternativeName>
        <fullName>NADH-plastoquinone oxidoreductase subunit 5</fullName>
    </alternativeName>
</protein>
<sequence length="745" mass="84612">MEHADQYSWIIPFVPLPIPILIGMGLLLFPTATKRLLLFPTATKNLRRMWAFPNILLLSIVMIFSLDLSIQQINGSSIYQYVWSWTINNDFSFEFGYFIDSLTSIMSILITTVGIFVLIYSDNYMSHDEGYLRFFAYMSLFNTSMLGLVTSCNLIQIYIFWELVGMCSYLLIGFWFTRPAAANACQKAFVTNRIGDFGLLLGILGFYWITGSFEFQDLFEIFNNLIYNNEVHFLFVTLCASLLFAGAVAKSAQFPLHVWLPDAMEGPTPISALIHAATMVAAGIFLVARLFPLFIVIPYIMNLISLIGIITVLLGATLALAQNDIKRGLAYSTMSQLGYMMLALGMGSYRAALFHLITHAYSKALLFLASGSIIHSMEAIVGYSPEKSQNMVFMGGLRKHVPVTQIAFLVGTLSLCGIPPLACFWSKDEILSDSWLYSPIFAIIAWSTAGLTAFYMFRIYLLTFEGHLNVHFQKYSGKKSSSFYSIKLWGKEEQKIINRNFRLFPLLTLTMNNNEQPYTIGGKKEARITITNFGYKKAFSYPHESDNTMLFPMLILLLFTLFVGAIAIPFNQEGMHLDILSKLLTPSINLLHQNSNDFEDSYQFFKNATFSVSIACFGIFTAFLLYKPFYSSVQNLNLLNSFVKRGPKRILLDKMIYLIYDWSYNRGYIDMFYSISLTKGIRGLAELTHFFDRRVIDGITNGVGITSFFVGESVKYLGGSRISFYLLLYLVYVFIFLVISYFILF</sequence>
<comment type="function">
    <text evidence="1">NDH shuttles electrons from NAD(P)H:plastoquinone, via FMN and iron-sulfur (Fe-S) centers, to quinones in the photosynthetic chain and possibly in a chloroplast respiratory chain. The immediate electron acceptor for the enzyme in this species is believed to be plastoquinone. Couples the redox reaction to proton translocation, and thus conserves the redox energy in a proton gradient (By similarity).</text>
</comment>
<comment type="catalytic activity">
    <reaction>
        <text>a plastoquinone + NADH + (n+1) H(+)(in) = a plastoquinol + NAD(+) + n H(+)(out)</text>
        <dbReference type="Rhea" id="RHEA:42608"/>
        <dbReference type="Rhea" id="RHEA-COMP:9561"/>
        <dbReference type="Rhea" id="RHEA-COMP:9562"/>
        <dbReference type="ChEBI" id="CHEBI:15378"/>
        <dbReference type="ChEBI" id="CHEBI:17757"/>
        <dbReference type="ChEBI" id="CHEBI:57540"/>
        <dbReference type="ChEBI" id="CHEBI:57945"/>
        <dbReference type="ChEBI" id="CHEBI:62192"/>
    </reaction>
</comment>
<comment type="catalytic activity">
    <reaction>
        <text>a plastoquinone + NADPH + (n+1) H(+)(in) = a plastoquinol + NADP(+) + n H(+)(out)</text>
        <dbReference type="Rhea" id="RHEA:42612"/>
        <dbReference type="Rhea" id="RHEA-COMP:9561"/>
        <dbReference type="Rhea" id="RHEA-COMP:9562"/>
        <dbReference type="ChEBI" id="CHEBI:15378"/>
        <dbReference type="ChEBI" id="CHEBI:17757"/>
        <dbReference type="ChEBI" id="CHEBI:57783"/>
        <dbReference type="ChEBI" id="CHEBI:58349"/>
        <dbReference type="ChEBI" id="CHEBI:62192"/>
    </reaction>
</comment>
<comment type="subunit">
    <text evidence="1">NDH is composed of at least 16 different subunits, 5 of which are encoded in the nucleus.</text>
</comment>
<comment type="subcellular location">
    <subcellularLocation>
        <location evidence="1">Plastid</location>
        <location evidence="1">Chloroplast thylakoid membrane</location>
        <topology evidence="1">Multi-pass membrane protein</topology>
    </subcellularLocation>
</comment>
<comment type="similarity">
    <text evidence="3">Belongs to the complex I subunit 5 family.</text>
</comment>
<dbReference type="EC" id="7.1.1.-"/>
<dbReference type="EMBL" id="AP009123">
    <property type="protein sequence ID" value="BAF41294.1"/>
    <property type="molecule type" value="Genomic_DNA"/>
</dbReference>
<dbReference type="RefSeq" id="YP_913233.1">
    <property type="nucleotide sequence ID" value="NC_008641.1"/>
</dbReference>
<dbReference type="SMR" id="A0ZZ82"/>
<dbReference type="GeneID" id="4575199"/>
<dbReference type="GO" id="GO:0009535">
    <property type="term" value="C:chloroplast thylakoid membrane"/>
    <property type="evidence" value="ECO:0007669"/>
    <property type="project" value="UniProtKB-SubCell"/>
</dbReference>
<dbReference type="GO" id="GO:0008137">
    <property type="term" value="F:NADH dehydrogenase (ubiquinone) activity"/>
    <property type="evidence" value="ECO:0007669"/>
    <property type="project" value="InterPro"/>
</dbReference>
<dbReference type="GO" id="GO:0048038">
    <property type="term" value="F:quinone binding"/>
    <property type="evidence" value="ECO:0007669"/>
    <property type="project" value="UniProtKB-KW"/>
</dbReference>
<dbReference type="GO" id="GO:0042773">
    <property type="term" value="P:ATP synthesis coupled electron transport"/>
    <property type="evidence" value="ECO:0007669"/>
    <property type="project" value="InterPro"/>
</dbReference>
<dbReference type="GO" id="GO:0015990">
    <property type="term" value="P:electron transport coupled proton transport"/>
    <property type="evidence" value="ECO:0007669"/>
    <property type="project" value="TreeGrafter"/>
</dbReference>
<dbReference type="Gene3D" id="1.20.5.2700">
    <property type="match status" value="1"/>
</dbReference>
<dbReference type="InterPro" id="IPR002128">
    <property type="entry name" value="NADH_UbQ_OxRdtase_chlpt_su5_C"/>
</dbReference>
<dbReference type="InterPro" id="IPR018393">
    <property type="entry name" value="NADHpl_OxRdtase_5_subgr"/>
</dbReference>
<dbReference type="InterPro" id="IPR001750">
    <property type="entry name" value="ND/Mrp_TM"/>
</dbReference>
<dbReference type="InterPro" id="IPR003945">
    <property type="entry name" value="NU5C-like"/>
</dbReference>
<dbReference type="InterPro" id="IPR001516">
    <property type="entry name" value="Proton_antipo_N"/>
</dbReference>
<dbReference type="NCBIfam" id="TIGR01974">
    <property type="entry name" value="NDH_I_L"/>
    <property type="match status" value="1"/>
</dbReference>
<dbReference type="NCBIfam" id="NF005141">
    <property type="entry name" value="PRK06590.1"/>
    <property type="match status" value="1"/>
</dbReference>
<dbReference type="PANTHER" id="PTHR42829">
    <property type="entry name" value="NADH-UBIQUINONE OXIDOREDUCTASE CHAIN 5"/>
    <property type="match status" value="1"/>
</dbReference>
<dbReference type="PANTHER" id="PTHR42829:SF2">
    <property type="entry name" value="NADH-UBIQUINONE OXIDOREDUCTASE CHAIN 5"/>
    <property type="match status" value="1"/>
</dbReference>
<dbReference type="Pfam" id="PF01010">
    <property type="entry name" value="Proton_antipo_C"/>
    <property type="match status" value="1"/>
</dbReference>
<dbReference type="Pfam" id="PF00361">
    <property type="entry name" value="Proton_antipo_M"/>
    <property type="match status" value="1"/>
</dbReference>
<dbReference type="Pfam" id="PF00662">
    <property type="entry name" value="Proton_antipo_N"/>
    <property type="match status" value="1"/>
</dbReference>
<dbReference type="PRINTS" id="PR01434">
    <property type="entry name" value="NADHDHGNASE5"/>
</dbReference>
<dbReference type="PRINTS" id="PR01435">
    <property type="entry name" value="NPOXDRDTASE5"/>
</dbReference>
<name>NU5C_GOSBA</name>
<gene>
    <name type="primary">ndhF</name>
</gene>
<geneLocation type="chloroplast"/>